<gene>
    <name evidence="1" type="primary">rplQ</name>
    <name type="ordered locus">FMG_0182</name>
</gene>
<sequence>MANLRKLGRRTDHRTAMLRNLVQSLFENGKIETTVTRAKEARREAEKMITLGKKGDLSARREALKYIYKKDVVYTLFEEIAPVYADRQGGYTRILKLGPRRGDGTEMCILELVDYTKKESSEEKETVKADK</sequence>
<feature type="chain" id="PRO_1000144428" description="Large ribosomal subunit protein bL17">
    <location>
        <begin position="1"/>
        <end position="131"/>
    </location>
</feature>
<evidence type="ECO:0000255" key="1">
    <source>
        <dbReference type="HAMAP-Rule" id="MF_01368"/>
    </source>
</evidence>
<evidence type="ECO:0000305" key="2"/>
<comment type="subunit">
    <text evidence="1">Part of the 50S ribosomal subunit. Contacts protein L32.</text>
</comment>
<comment type="similarity">
    <text evidence="1">Belongs to the bacterial ribosomal protein bL17 family.</text>
</comment>
<accession>B0RZT6</accession>
<keyword id="KW-1185">Reference proteome</keyword>
<keyword id="KW-0687">Ribonucleoprotein</keyword>
<keyword id="KW-0689">Ribosomal protein</keyword>
<organism>
    <name type="scientific">Finegoldia magna (strain ATCC 29328 / DSM 20472 / WAL 2508)</name>
    <name type="common">Peptostreptococcus magnus</name>
    <dbReference type="NCBI Taxonomy" id="334413"/>
    <lineage>
        <taxon>Bacteria</taxon>
        <taxon>Bacillati</taxon>
        <taxon>Bacillota</taxon>
        <taxon>Tissierellia</taxon>
        <taxon>Tissierellales</taxon>
        <taxon>Peptoniphilaceae</taxon>
        <taxon>Finegoldia</taxon>
    </lineage>
</organism>
<reference key="1">
    <citation type="journal article" date="2008" name="DNA Res.">
        <title>Complete genome sequence of Finegoldia magna, an anaerobic opportunistic pathogen.</title>
        <authorList>
            <person name="Goto T."/>
            <person name="Yamashita A."/>
            <person name="Hirakawa H."/>
            <person name="Matsutani M."/>
            <person name="Todo K."/>
            <person name="Ohshima K."/>
            <person name="Toh H."/>
            <person name="Miyamoto K."/>
            <person name="Kuhara S."/>
            <person name="Hattori M."/>
            <person name="Shimizu T."/>
            <person name="Akimoto S."/>
        </authorList>
    </citation>
    <scope>NUCLEOTIDE SEQUENCE [LARGE SCALE GENOMIC DNA]</scope>
    <source>
        <strain>ATCC 29328 / DSM 20472 / WAL 2508</strain>
    </source>
</reference>
<proteinExistence type="inferred from homology"/>
<protein>
    <recommendedName>
        <fullName evidence="1">Large ribosomal subunit protein bL17</fullName>
    </recommendedName>
    <alternativeName>
        <fullName evidence="2">50S ribosomal protein L17</fullName>
    </alternativeName>
</protein>
<dbReference type="EMBL" id="AP008971">
    <property type="protein sequence ID" value="BAG07600.1"/>
    <property type="molecule type" value="Genomic_DNA"/>
</dbReference>
<dbReference type="RefSeq" id="WP_002837396.1">
    <property type="nucleotide sequence ID" value="NC_010376.1"/>
</dbReference>
<dbReference type="SMR" id="B0RZT6"/>
<dbReference type="STRING" id="334413.FMG_0182"/>
<dbReference type="KEGG" id="fma:FMG_0182"/>
<dbReference type="eggNOG" id="COG0203">
    <property type="taxonomic scope" value="Bacteria"/>
</dbReference>
<dbReference type="HOGENOM" id="CLU_074407_2_2_9"/>
<dbReference type="Proteomes" id="UP000001319">
    <property type="component" value="Chromosome"/>
</dbReference>
<dbReference type="GO" id="GO:0022625">
    <property type="term" value="C:cytosolic large ribosomal subunit"/>
    <property type="evidence" value="ECO:0007669"/>
    <property type="project" value="TreeGrafter"/>
</dbReference>
<dbReference type="GO" id="GO:0003735">
    <property type="term" value="F:structural constituent of ribosome"/>
    <property type="evidence" value="ECO:0007669"/>
    <property type="project" value="InterPro"/>
</dbReference>
<dbReference type="GO" id="GO:0006412">
    <property type="term" value="P:translation"/>
    <property type="evidence" value="ECO:0007669"/>
    <property type="project" value="UniProtKB-UniRule"/>
</dbReference>
<dbReference type="FunFam" id="3.90.1030.10:FF:000001">
    <property type="entry name" value="50S ribosomal protein L17"/>
    <property type="match status" value="1"/>
</dbReference>
<dbReference type="Gene3D" id="3.90.1030.10">
    <property type="entry name" value="Ribosomal protein L17"/>
    <property type="match status" value="1"/>
</dbReference>
<dbReference type="HAMAP" id="MF_01368">
    <property type="entry name" value="Ribosomal_bL17"/>
    <property type="match status" value="1"/>
</dbReference>
<dbReference type="InterPro" id="IPR000456">
    <property type="entry name" value="Ribosomal_bL17"/>
</dbReference>
<dbReference type="InterPro" id="IPR047859">
    <property type="entry name" value="Ribosomal_bL17_CS"/>
</dbReference>
<dbReference type="InterPro" id="IPR036373">
    <property type="entry name" value="Ribosomal_bL17_sf"/>
</dbReference>
<dbReference type="NCBIfam" id="TIGR00059">
    <property type="entry name" value="L17"/>
    <property type="match status" value="1"/>
</dbReference>
<dbReference type="PANTHER" id="PTHR14413:SF16">
    <property type="entry name" value="LARGE RIBOSOMAL SUBUNIT PROTEIN BL17M"/>
    <property type="match status" value="1"/>
</dbReference>
<dbReference type="PANTHER" id="PTHR14413">
    <property type="entry name" value="RIBOSOMAL PROTEIN L17"/>
    <property type="match status" value="1"/>
</dbReference>
<dbReference type="Pfam" id="PF01196">
    <property type="entry name" value="Ribosomal_L17"/>
    <property type="match status" value="1"/>
</dbReference>
<dbReference type="SUPFAM" id="SSF64263">
    <property type="entry name" value="Prokaryotic ribosomal protein L17"/>
    <property type="match status" value="1"/>
</dbReference>
<dbReference type="PROSITE" id="PS01167">
    <property type="entry name" value="RIBOSOMAL_L17"/>
    <property type="match status" value="1"/>
</dbReference>
<name>RL17_FINM2</name>